<accession>P0CC37</accession>
<accession>A6MM81</accession>
<geneLocation type="chloroplast"/>
<feature type="chain" id="PRO_0000391256" description="NAD(P)H-quinone oxidoreductase subunit 2 B, chloroplastic">
    <location>
        <begin position="1"/>
        <end position="510"/>
    </location>
</feature>
<feature type="transmembrane region" description="Helical" evidence="1">
    <location>
        <begin position="24"/>
        <end position="44"/>
    </location>
</feature>
<feature type="transmembrane region" description="Helical" evidence="1">
    <location>
        <begin position="57"/>
        <end position="77"/>
    </location>
</feature>
<feature type="transmembrane region" description="Helical" evidence="1">
    <location>
        <begin position="99"/>
        <end position="119"/>
    </location>
</feature>
<feature type="transmembrane region" description="Helical" evidence="1">
    <location>
        <begin position="124"/>
        <end position="144"/>
    </location>
</feature>
<feature type="transmembrane region" description="Helical" evidence="1">
    <location>
        <begin position="149"/>
        <end position="169"/>
    </location>
</feature>
<feature type="transmembrane region" description="Helical" evidence="1">
    <location>
        <begin position="183"/>
        <end position="203"/>
    </location>
</feature>
<feature type="transmembrane region" description="Helical" evidence="1">
    <location>
        <begin position="227"/>
        <end position="247"/>
    </location>
</feature>
<feature type="transmembrane region" description="Helical" evidence="1">
    <location>
        <begin position="295"/>
        <end position="315"/>
    </location>
</feature>
<feature type="transmembrane region" description="Helical" evidence="1">
    <location>
        <begin position="323"/>
        <end position="343"/>
    </location>
</feature>
<feature type="transmembrane region" description="Helical" evidence="1">
    <location>
        <begin position="347"/>
        <end position="367"/>
    </location>
</feature>
<feature type="transmembrane region" description="Helical" evidence="1">
    <location>
        <begin position="395"/>
        <end position="415"/>
    </location>
</feature>
<feature type="transmembrane region" description="Helical" evidence="1">
    <location>
        <begin position="418"/>
        <end position="438"/>
    </location>
</feature>
<feature type="transmembrane region" description="Helical" evidence="1">
    <location>
        <begin position="484"/>
        <end position="504"/>
    </location>
</feature>
<protein>
    <recommendedName>
        <fullName evidence="1">NAD(P)H-quinone oxidoreductase subunit 2 B, chloroplastic</fullName>
        <ecNumber evidence="1">7.1.1.-</ecNumber>
    </recommendedName>
    <alternativeName>
        <fullName evidence="1">NAD(P)H dehydrogenase, subunit 2 B</fullName>
    </alternativeName>
    <alternativeName>
        <fullName evidence="1">NADH-plastoquinone oxidoreductase subunit 2 B</fullName>
    </alternativeName>
</protein>
<reference key="1">
    <citation type="journal article" date="2007" name="Mol. Phylogenet. Evol.">
        <title>Phylogenetic and evolutionary implications of complete chloroplast genome sequences of four early-diverging angiosperms: Buxus (Buxaceae), Chloranthus (Chloranthaceae), Dioscorea (Dioscoreaceae), and Illicium (Schisandraceae).</title>
        <authorList>
            <person name="Hansen D.R."/>
            <person name="Dastidar S.G."/>
            <person name="Cai Z."/>
            <person name="Penaflor C."/>
            <person name="Kuehl J.V."/>
            <person name="Boore J.L."/>
            <person name="Jansen R.K."/>
        </authorList>
    </citation>
    <scope>NUCLEOTIDE SEQUENCE [LARGE SCALE GENOMIC DNA]</scope>
</reference>
<organism>
    <name type="scientific">Buxus microphylla</name>
    <name type="common">Littleleaf boxwood</name>
    <name type="synonym">Japanese boxwood</name>
    <dbReference type="NCBI Taxonomy" id="153571"/>
    <lineage>
        <taxon>Eukaryota</taxon>
        <taxon>Viridiplantae</taxon>
        <taxon>Streptophyta</taxon>
        <taxon>Embryophyta</taxon>
        <taxon>Tracheophyta</taxon>
        <taxon>Spermatophyta</taxon>
        <taxon>Magnoliopsida</taxon>
        <taxon>Buxales</taxon>
        <taxon>Buxaceae</taxon>
        <taxon>Buxus</taxon>
    </lineage>
</organism>
<dbReference type="EC" id="7.1.1.-" evidence="1"/>
<dbReference type="EMBL" id="EF380351">
    <property type="protein sequence ID" value="ABQ45311.1"/>
    <property type="molecule type" value="Genomic_DNA"/>
</dbReference>
<dbReference type="SMR" id="P0CC37"/>
<dbReference type="GO" id="GO:0009535">
    <property type="term" value="C:chloroplast thylakoid membrane"/>
    <property type="evidence" value="ECO:0007669"/>
    <property type="project" value="UniProtKB-SubCell"/>
</dbReference>
<dbReference type="GO" id="GO:0008137">
    <property type="term" value="F:NADH dehydrogenase (ubiquinone) activity"/>
    <property type="evidence" value="ECO:0007669"/>
    <property type="project" value="InterPro"/>
</dbReference>
<dbReference type="GO" id="GO:0048038">
    <property type="term" value="F:quinone binding"/>
    <property type="evidence" value="ECO:0007669"/>
    <property type="project" value="UniProtKB-KW"/>
</dbReference>
<dbReference type="GO" id="GO:0042773">
    <property type="term" value="P:ATP synthesis coupled electron transport"/>
    <property type="evidence" value="ECO:0007669"/>
    <property type="project" value="InterPro"/>
</dbReference>
<dbReference type="GO" id="GO:0019684">
    <property type="term" value="P:photosynthesis, light reaction"/>
    <property type="evidence" value="ECO:0007669"/>
    <property type="project" value="UniProtKB-UniRule"/>
</dbReference>
<dbReference type="HAMAP" id="MF_00445">
    <property type="entry name" value="NDH1_NuoN_1"/>
    <property type="match status" value="1"/>
</dbReference>
<dbReference type="InterPro" id="IPR010096">
    <property type="entry name" value="NADH-Q_OxRdtase_suN/2"/>
</dbReference>
<dbReference type="InterPro" id="IPR001750">
    <property type="entry name" value="ND/Mrp_TM"/>
</dbReference>
<dbReference type="InterPro" id="IPR045693">
    <property type="entry name" value="Ndh2_N"/>
</dbReference>
<dbReference type="NCBIfam" id="TIGR01770">
    <property type="entry name" value="NDH_I_N"/>
    <property type="match status" value="1"/>
</dbReference>
<dbReference type="NCBIfam" id="NF002701">
    <property type="entry name" value="PRK02504.1"/>
    <property type="match status" value="1"/>
</dbReference>
<dbReference type="PANTHER" id="PTHR22773">
    <property type="entry name" value="NADH DEHYDROGENASE"/>
    <property type="match status" value="1"/>
</dbReference>
<dbReference type="Pfam" id="PF19530">
    <property type="entry name" value="Ndh2_N"/>
    <property type="match status" value="1"/>
</dbReference>
<dbReference type="Pfam" id="PF00361">
    <property type="entry name" value="Proton_antipo_M"/>
    <property type="match status" value="1"/>
</dbReference>
<dbReference type="PRINTS" id="PR01434">
    <property type="entry name" value="NADHDHGNASE5"/>
</dbReference>
<evidence type="ECO:0000255" key="1">
    <source>
        <dbReference type="HAMAP-Rule" id="MF_00445"/>
    </source>
</evidence>
<name>NU2C2_BUXMI</name>
<keyword id="KW-0150">Chloroplast</keyword>
<keyword id="KW-0472">Membrane</keyword>
<keyword id="KW-0520">NAD</keyword>
<keyword id="KW-0521">NADP</keyword>
<keyword id="KW-0934">Plastid</keyword>
<keyword id="KW-0618">Plastoquinone</keyword>
<keyword id="KW-0874">Quinone</keyword>
<keyword id="KW-0793">Thylakoid</keyword>
<keyword id="KW-1278">Translocase</keyword>
<keyword id="KW-0812">Transmembrane</keyword>
<keyword id="KW-1133">Transmembrane helix</keyword>
<keyword id="KW-0813">Transport</keyword>
<comment type="function">
    <text evidence="1">NDH shuttles electrons from NAD(P)H:plastoquinone, via FMN and iron-sulfur (Fe-S) centers, to quinones in the photosynthetic chain and possibly in a chloroplast respiratory chain. The immediate electron acceptor for the enzyme in this species is believed to be plastoquinone. Couples the redox reaction to proton translocation, and thus conserves the redox energy in a proton gradient.</text>
</comment>
<comment type="catalytic activity">
    <reaction evidence="1">
        <text>a plastoquinone + NADH + (n+1) H(+)(in) = a plastoquinol + NAD(+) + n H(+)(out)</text>
        <dbReference type="Rhea" id="RHEA:42608"/>
        <dbReference type="Rhea" id="RHEA-COMP:9561"/>
        <dbReference type="Rhea" id="RHEA-COMP:9562"/>
        <dbReference type="ChEBI" id="CHEBI:15378"/>
        <dbReference type="ChEBI" id="CHEBI:17757"/>
        <dbReference type="ChEBI" id="CHEBI:57540"/>
        <dbReference type="ChEBI" id="CHEBI:57945"/>
        <dbReference type="ChEBI" id="CHEBI:62192"/>
    </reaction>
</comment>
<comment type="catalytic activity">
    <reaction evidence="1">
        <text>a plastoquinone + NADPH + (n+1) H(+)(in) = a plastoquinol + NADP(+) + n H(+)(out)</text>
        <dbReference type="Rhea" id="RHEA:42612"/>
        <dbReference type="Rhea" id="RHEA-COMP:9561"/>
        <dbReference type="Rhea" id="RHEA-COMP:9562"/>
        <dbReference type="ChEBI" id="CHEBI:15378"/>
        <dbReference type="ChEBI" id="CHEBI:17757"/>
        <dbReference type="ChEBI" id="CHEBI:57783"/>
        <dbReference type="ChEBI" id="CHEBI:58349"/>
        <dbReference type="ChEBI" id="CHEBI:62192"/>
    </reaction>
</comment>
<comment type="subunit">
    <text evidence="1">NDH is composed of at least 16 different subunits, 5 of which are encoded in the nucleus.</text>
</comment>
<comment type="subcellular location">
    <subcellularLocation>
        <location evidence="1">Plastid</location>
        <location evidence="1">Chloroplast thylakoid membrane</location>
        <topology evidence="1">Multi-pass membrane protein</topology>
    </subcellularLocation>
</comment>
<comment type="similarity">
    <text evidence="1">Belongs to the complex I subunit 2 family.</text>
</comment>
<proteinExistence type="inferred from homology"/>
<sequence length="510" mass="56694">MIWHVQNENFILDSTRIFMKAFHLLLFHGSFIFPECILIFGLILLLMIDSTSDQKDIPWLYFISSTSLVISITALLFRWREEPMISFSGNFQTNNFNEIFQFLILLCSTLCIPLSVEYIECTEMAITEFLLFVLTATLGGMFLCGANDLITIFVAPECFSLCSYLLSGYTKRDVRSNEATTKYLLMGGASSSILVHGFSWLYGSSGGEIELQEIVNGLINTQMYNSPGISIALIFITVGIGFKLSPAPSHQWTPDVYEGSPTPVVAFLSVTSKVAASASATRIFDIPFYFSSNEWHLHLEILAILSMILGNLIAITQTSMKRMLAYSSIGQIGYVIIGIIVGDSNDGYASMITYMLFYISMNLGTFARIVSFGLRTGTDNIRDYAGLYTKDPFLALSLALCLLSLGGLPPLAGFFGKLHLFWCGWQAGLYFLVSIGLLTSVVSIYYYLKIIKLLMTGRNQEITPHVRNYRRSPLRSNNSIELSMIVCVIASTIPGISMNPIIAIAQDTLF</sequence>
<gene>
    <name evidence="1" type="primary">ndhB2</name>
</gene>